<proteinExistence type="inferred from homology"/>
<sequence length="431" mass="47567">MKGSVVFLRSLLCLLCLLPSTLHCEDLEIHVRSESSLLPIAVSLLSSPKDSRQASYLASLRDLFARDLALGDLLAPTKELAPQTIFIEASYPELIFSLKKEGKGSQKIFSLELSGDPSKDHQAIHEAADRIHFLLTRVPGISSGKIIFSLCATNSSTELKQGELWSVDYDGQHLYPLTNEHSLSVTPTWMHISHIPAYMYVSYKLGVPKIFLNTLNQPAGKKILAMQGNQFMPTFSPKTKLLAFISDRDGNPDLFVQSFSLATGAIGTPKKLLNEAFGTQGNPSFSPDGTRLVFVSNKDGTPRIYQMQISPEQHSPRLLTKKYRNSSCPTWSPDGKKIAFCSVIKGVRQICVYDLASGRDEQLTTSTEHKESPSWAADSNHLVYSAGSSNTSELFLLSLITKKSRKIVIGSGEKRFPCWGAFPSQHIKKTS</sequence>
<reference key="1">
    <citation type="journal article" date="1998" name="Science">
        <title>Genome sequence of an obligate intracellular pathogen of humans: Chlamydia trachomatis.</title>
        <authorList>
            <person name="Stephens R.S."/>
            <person name="Kalman S."/>
            <person name="Lammel C.J."/>
            <person name="Fan J."/>
            <person name="Marathe R."/>
            <person name="Aravind L."/>
            <person name="Mitchell W.P."/>
            <person name="Olinger L."/>
            <person name="Tatusov R.L."/>
            <person name="Zhao Q."/>
            <person name="Koonin E.V."/>
            <person name="Davis R.W."/>
        </authorList>
    </citation>
    <scope>NUCLEOTIDE SEQUENCE [LARGE SCALE GENOMIC DNA]</scope>
    <source>
        <strain>ATCC VR-885 / DSM 19411 / UW-3/Cx</strain>
    </source>
</reference>
<comment type="subcellular location">
    <subcellularLocation>
        <location evidence="1">Periplasm</location>
    </subcellularLocation>
</comment>
<comment type="similarity">
    <text evidence="3">Belongs to the TolB family.</text>
</comment>
<feature type="signal peptide" evidence="2">
    <location>
        <begin position="1"/>
        <end position="24"/>
    </location>
</feature>
<feature type="chain" id="PRO_0000034642" description="Protein TolB homolog">
    <location>
        <begin position="25"/>
        <end position="431"/>
    </location>
</feature>
<organism>
    <name type="scientific">Chlamydia trachomatis serovar D (strain ATCC VR-885 / DSM 19411 / UW-3/Cx)</name>
    <dbReference type="NCBI Taxonomy" id="272561"/>
    <lineage>
        <taxon>Bacteria</taxon>
        <taxon>Pseudomonadati</taxon>
        <taxon>Chlamydiota</taxon>
        <taxon>Chlamydiia</taxon>
        <taxon>Chlamydiales</taxon>
        <taxon>Chlamydiaceae</taxon>
        <taxon>Chlamydia/Chlamydophila group</taxon>
        <taxon>Chlamydia</taxon>
    </lineage>
</organism>
<keyword id="KW-0574">Periplasm</keyword>
<keyword id="KW-1185">Reference proteome</keyword>
<keyword id="KW-0732">Signal</keyword>
<accession>O84604</accession>
<evidence type="ECO:0000250" key="1">
    <source>
        <dbReference type="UniProtKB" id="P0A855"/>
    </source>
</evidence>
<evidence type="ECO:0000255" key="2"/>
<evidence type="ECO:0000305" key="3"/>
<dbReference type="EMBL" id="AE001273">
    <property type="protein sequence ID" value="AAC68201.1"/>
    <property type="molecule type" value="Genomic_DNA"/>
</dbReference>
<dbReference type="PIR" id="D71495">
    <property type="entry name" value="D71495"/>
</dbReference>
<dbReference type="RefSeq" id="NP_220115.1">
    <property type="nucleotide sequence ID" value="NC_000117.1"/>
</dbReference>
<dbReference type="RefSeq" id="WP_009873932.1">
    <property type="nucleotide sequence ID" value="NC_000117.1"/>
</dbReference>
<dbReference type="SMR" id="O84604"/>
<dbReference type="STRING" id="272561.CT_599"/>
<dbReference type="EnsemblBacteria" id="AAC68201">
    <property type="protein sequence ID" value="AAC68201"/>
    <property type="gene ID" value="CT_599"/>
</dbReference>
<dbReference type="GeneID" id="884377"/>
<dbReference type="KEGG" id="ctr:CT_599"/>
<dbReference type="PATRIC" id="fig|272561.5.peg.654"/>
<dbReference type="HOGENOM" id="CLU_635688_0_0_0"/>
<dbReference type="InParanoid" id="O84604"/>
<dbReference type="OrthoDB" id="108903at2"/>
<dbReference type="Proteomes" id="UP000000431">
    <property type="component" value="Chromosome"/>
</dbReference>
<dbReference type="GO" id="GO:0042597">
    <property type="term" value="C:periplasmic space"/>
    <property type="evidence" value="ECO:0007669"/>
    <property type="project" value="UniProtKB-SubCell"/>
</dbReference>
<dbReference type="Gene3D" id="2.120.10.30">
    <property type="entry name" value="TolB, C-terminal domain"/>
    <property type="match status" value="1"/>
</dbReference>
<dbReference type="InterPro" id="IPR011042">
    <property type="entry name" value="6-blade_b-propeller_TolB-like"/>
</dbReference>
<dbReference type="InterPro" id="IPR011659">
    <property type="entry name" value="PD40"/>
</dbReference>
<dbReference type="NCBIfam" id="NF002183">
    <property type="entry name" value="PRK01029.1"/>
    <property type="match status" value="1"/>
</dbReference>
<dbReference type="PANTHER" id="PTHR36842:SF1">
    <property type="entry name" value="PROTEIN TOLB"/>
    <property type="match status" value="1"/>
</dbReference>
<dbReference type="PANTHER" id="PTHR36842">
    <property type="entry name" value="PROTEIN TOLB HOMOLOG"/>
    <property type="match status" value="1"/>
</dbReference>
<dbReference type="Pfam" id="PF07676">
    <property type="entry name" value="PD40"/>
    <property type="match status" value="4"/>
</dbReference>
<dbReference type="SUPFAM" id="SSF82171">
    <property type="entry name" value="DPP6 N-terminal domain-like"/>
    <property type="match status" value="1"/>
</dbReference>
<protein>
    <recommendedName>
        <fullName evidence="3">Protein TolB homolog</fullName>
    </recommendedName>
</protein>
<name>TOLB_CHLTR</name>
<gene>
    <name type="primary">tolB</name>
    <name type="ordered locus">CT_599</name>
</gene>